<feature type="chain" id="PRO_0000102478" description="Endoribonuclease YbeY">
    <location>
        <begin position="1"/>
        <end position="141"/>
    </location>
</feature>
<feature type="binding site" evidence="1">
    <location>
        <position position="107"/>
    </location>
    <ligand>
        <name>Zn(2+)</name>
        <dbReference type="ChEBI" id="CHEBI:29105"/>
        <note>catalytic</note>
    </ligand>
</feature>
<feature type="binding site" evidence="1">
    <location>
        <position position="111"/>
    </location>
    <ligand>
        <name>Zn(2+)</name>
        <dbReference type="ChEBI" id="CHEBI:29105"/>
        <note>catalytic</note>
    </ligand>
</feature>
<feature type="binding site" evidence="1">
    <location>
        <position position="117"/>
    </location>
    <ligand>
        <name>Zn(2+)</name>
        <dbReference type="ChEBI" id="CHEBI:29105"/>
        <note>catalytic</note>
    </ligand>
</feature>
<sequence>MNCKILFRKELNDSECELSLLLVGDSDMKEINRLRRGKDKTTDVLSFPLEFDFSPLQKILPKNTSSDQKMFPPIALGEIVISIDTLQKQAKEIGHSEKDEFYRLLVHGFLHLLGYDHERGDKEEHIMKLKEDECLEILQGL</sequence>
<evidence type="ECO:0000255" key="1">
    <source>
        <dbReference type="HAMAP-Rule" id="MF_00009"/>
    </source>
</evidence>
<proteinExistence type="inferred from homology"/>
<comment type="function">
    <text evidence="1">Single strand-specific metallo-endoribonuclease involved in late-stage 70S ribosome quality control and in maturation of the 3' terminus of the 16S rRNA.</text>
</comment>
<comment type="cofactor">
    <cofactor evidence="1">
        <name>Zn(2+)</name>
        <dbReference type="ChEBI" id="CHEBI:29105"/>
    </cofactor>
    <text evidence="1">Binds 1 zinc ion.</text>
</comment>
<comment type="subcellular location">
    <subcellularLocation>
        <location evidence="1">Cytoplasm</location>
    </subcellularLocation>
</comment>
<comment type="similarity">
    <text evidence="1">Belongs to the endoribonuclease YbeY family.</text>
</comment>
<dbReference type="EC" id="3.1.-.-" evidence="1"/>
<dbReference type="EMBL" id="AE010300">
    <property type="protein sequence ID" value="AAN48883.1"/>
    <property type="molecule type" value="Genomic_DNA"/>
</dbReference>
<dbReference type="RefSeq" id="NP_711865.1">
    <property type="nucleotide sequence ID" value="NC_004342.2"/>
</dbReference>
<dbReference type="RefSeq" id="WP_000995658.1">
    <property type="nucleotide sequence ID" value="NC_004342.2"/>
</dbReference>
<dbReference type="SMR" id="Q8F5J7"/>
<dbReference type="FunCoup" id="Q8F5J7">
    <property type="interactions" value="220"/>
</dbReference>
<dbReference type="STRING" id="189518.LA_1684"/>
<dbReference type="PaxDb" id="189518-LA_1684"/>
<dbReference type="EnsemblBacteria" id="AAN48883">
    <property type="protein sequence ID" value="AAN48883"/>
    <property type="gene ID" value="LA_1684"/>
</dbReference>
<dbReference type="KEGG" id="lil:LA_1684"/>
<dbReference type="PATRIC" id="fig|189518.3.peg.1678"/>
<dbReference type="HOGENOM" id="CLU_106710_3_3_12"/>
<dbReference type="InParanoid" id="Q8F5J7"/>
<dbReference type="OrthoDB" id="9807740at2"/>
<dbReference type="Proteomes" id="UP000001408">
    <property type="component" value="Chromosome I"/>
</dbReference>
<dbReference type="GO" id="GO:0005737">
    <property type="term" value="C:cytoplasm"/>
    <property type="evidence" value="ECO:0007669"/>
    <property type="project" value="UniProtKB-SubCell"/>
</dbReference>
<dbReference type="GO" id="GO:0004222">
    <property type="term" value="F:metalloendopeptidase activity"/>
    <property type="evidence" value="ECO:0007669"/>
    <property type="project" value="InterPro"/>
</dbReference>
<dbReference type="GO" id="GO:0004521">
    <property type="term" value="F:RNA endonuclease activity"/>
    <property type="evidence" value="ECO:0007669"/>
    <property type="project" value="UniProtKB-UniRule"/>
</dbReference>
<dbReference type="GO" id="GO:0008270">
    <property type="term" value="F:zinc ion binding"/>
    <property type="evidence" value="ECO:0007669"/>
    <property type="project" value="UniProtKB-UniRule"/>
</dbReference>
<dbReference type="GO" id="GO:0006364">
    <property type="term" value="P:rRNA processing"/>
    <property type="evidence" value="ECO:0007669"/>
    <property type="project" value="UniProtKB-UniRule"/>
</dbReference>
<dbReference type="Gene3D" id="3.40.390.30">
    <property type="entry name" value="Metalloproteases ('zincins'), catalytic domain"/>
    <property type="match status" value="1"/>
</dbReference>
<dbReference type="HAMAP" id="MF_00009">
    <property type="entry name" value="Endoribonucl_YbeY"/>
    <property type="match status" value="1"/>
</dbReference>
<dbReference type="InterPro" id="IPR023091">
    <property type="entry name" value="MetalPrtase_cat_dom_sf_prd"/>
</dbReference>
<dbReference type="InterPro" id="IPR002036">
    <property type="entry name" value="YbeY"/>
</dbReference>
<dbReference type="InterPro" id="IPR020549">
    <property type="entry name" value="YbeY_CS"/>
</dbReference>
<dbReference type="NCBIfam" id="TIGR00043">
    <property type="entry name" value="rRNA maturation RNase YbeY"/>
    <property type="match status" value="1"/>
</dbReference>
<dbReference type="PANTHER" id="PTHR46986">
    <property type="entry name" value="ENDORIBONUCLEASE YBEY, CHLOROPLASTIC"/>
    <property type="match status" value="1"/>
</dbReference>
<dbReference type="PANTHER" id="PTHR46986:SF1">
    <property type="entry name" value="ENDORIBONUCLEASE YBEY, CHLOROPLASTIC"/>
    <property type="match status" value="1"/>
</dbReference>
<dbReference type="Pfam" id="PF02130">
    <property type="entry name" value="YbeY"/>
    <property type="match status" value="1"/>
</dbReference>
<dbReference type="SUPFAM" id="SSF55486">
    <property type="entry name" value="Metalloproteases ('zincins'), catalytic domain"/>
    <property type="match status" value="1"/>
</dbReference>
<dbReference type="PROSITE" id="PS01306">
    <property type="entry name" value="UPF0054"/>
    <property type="match status" value="1"/>
</dbReference>
<protein>
    <recommendedName>
        <fullName evidence="1">Endoribonuclease YbeY</fullName>
        <ecNumber evidence="1">3.1.-.-</ecNumber>
    </recommendedName>
</protein>
<gene>
    <name evidence="1" type="primary">ybeY</name>
    <name type="ordered locus">LA_1684</name>
</gene>
<organism>
    <name type="scientific">Leptospira interrogans serogroup Icterohaemorrhagiae serovar Lai (strain 56601)</name>
    <dbReference type="NCBI Taxonomy" id="189518"/>
    <lineage>
        <taxon>Bacteria</taxon>
        <taxon>Pseudomonadati</taxon>
        <taxon>Spirochaetota</taxon>
        <taxon>Spirochaetia</taxon>
        <taxon>Leptospirales</taxon>
        <taxon>Leptospiraceae</taxon>
        <taxon>Leptospira</taxon>
    </lineage>
</organism>
<reference key="1">
    <citation type="journal article" date="2003" name="Nature">
        <title>Unique physiological and pathogenic features of Leptospira interrogans revealed by whole-genome sequencing.</title>
        <authorList>
            <person name="Ren S.-X."/>
            <person name="Fu G."/>
            <person name="Jiang X.-G."/>
            <person name="Zeng R."/>
            <person name="Miao Y.-G."/>
            <person name="Xu H."/>
            <person name="Zhang Y.-X."/>
            <person name="Xiong H."/>
            <person name="Lu G."/>
            <person name="Lu L.-F."/>
            <person name="Jiang H.-Q."/>
            <person name="Jia J."/>
            <person name="Tu Y.-F."/>
            <person name="Jiang J.-X."/>
            <person name="Gu W.-Y."/>
            <person name="Zhang Y.-Q."/>
            <person name="Cai Z."/>
            <person name="Sheng H.-H."/>
            <person name="Yin H.-F."/>
            <person name="Zhang Y."/>
            <person name="Zhu G.-F."/>
            <person name="Wan M."/>
            <person name="Huang H.-L."/>
            <person name="Qian Z."/>
            <person name="Wang S.-Y."/>
            <person name="Ma W."/>
            <person name="Yao Z.-J."/>
            <person name="Shen Y."/>
            <person name="Qiang B.-Q."/>
            <person name="Xia Q.-C."/>
            <person name="Guo X.-K."/>
            <person name="Danchin A."/>
            <person name="Saint Girons I."/>
            <person name="Somerville R.L."/>
            <person name="Wen Y.-M."/>
            <person name="Shi M.-H."/>
            <person name="Chen Z."/>
            <person name="Xu J.-G."/>
            <person name="Zhao G.-P."/>
        </authorList>
    </citation>
    <scope>NUCLEOTIDE SEQUENCE [LARGE SCALE GENOMIC DNA]</scope>
    <source>
        <strain>56601</strain>
    </source>
</reference>
<keyword id="KW-0963">Cytoplasm</keyword>
<keyword id="KW-0255">Endonuclease</keyword>
<keyword id="KW-0378">Hydrolase</keyword>
<keyword id="KW-0479">Metal-binding</keyword>
<keyword id="KW-0540">Nuclease</keyword>
<keyword id="KW-1185">Reference proteome</keyword>
<keyword id="KW-0690">Ribosome biogenesis</keyword>
<keyword id="KW-0698">rRNA processing</keyword>
<keyword id="KW-0862">Zinc</keyword>
<name>YBEY_LEPIN</name>
<accession>Q8F5J7</accession>